<reference key="1">
    <citation type="submission" date="2007-06" db="EMBL/GenBank/DDBJ databases">
        <title>Complete sequence of Clostridium beijerinckii NCIMB 8052.</title>
        <authorList>
            <consortium name="US DOE Joint Genome Institute"/>
            <person name="Copeland A."/>
            <person name="Lucas S."/>
            <person name="Lapidus A."/>
            <person name="Barry K."/>
            <person name="Detter J.C."/>
            <person name="Glavina del Rio T."/>
            <person name="Hammon N."/>
            <person name="Israni S."/>
            <person name="Dalin E."/>
            <person name="Tice H."/>
            <person name="Pitluck S."/>
            <person name="Sims D."/>
            <person name="Brettin T."/>
            <person name="Bruce D."/>
            <person name="Tapia R."/>
            <person name="Brainard J."/>
            <person name="Schmutz J."/>
            <person name="Larimer F."/>
            <person name="Land M."/>
            <person name="Hauser L."/>
            <person name="Kyrpides N."/>
            <person name="Mikhailova N."/>
            <person name="Bennet G."/>
            <person name="Cann I."/>
            <person name="Chen J.-S."/>
            <person name="Contreras A.L."/>
            <person name="Jones D."/>
            <person name="Kashket E."/>
            <person name="Mitchell W."/>
            <person name="Stoddard S."/>
            <person name="Schwarz W."/>
            <person name="Qureshi N."/>
            <person name="Young M."/>
            <person name="Shi Z."/>
            <person name="Ezeji T."/>
            <person name="White B."/>
            <person name="Blaschek H."/>
            <person name="Richardson P."/>
        </authorList>
    </citation>
    <scope>NUCLEOTIDE SEQUENCE [LARGE SCALE GENOMIC DNA]</scope>
    <source>
        <strain>ATCC 51743 / NCIMB 8052</strain>
    </source>
</reference>
<protein>
    <recommendedName>
        <fullName evidence="1">ATP-dependent helicase/deoxyribonuclease subunit B</fullName>
        <ecNumber evidence="1">3.1.-.-</ecNumber>
    </recommendedName>
    <alternativeName>
        <fullName evidence="1">ATP-dependent helicase/nuclease subunit AddB</fullName>
    </alternativeName>
</protein>
<evidence type="ECO:0000255" key="1">
    <source>
        <dbReference type="HAMAP-Rule" id="MF_01452"/>
    </source>
</evidence>
<dbReference type="EC" id="3.1.-.-" evidence="1"/>
<dbReference type="EMBL" id="CP000721">
    <property type="protein sequence ID" value="ABR32203.1"/>
    <property type="molecule type" value="Genomic_DNA"/>
</dbReference>
<dbReference type="RefSeq" id="WP_011967378.1">
    <property type="nucleotide sequence ID" value="NC_009617.1"/>
</dbReference>
<dbReference type="SMR" id="A6LPC3"/>
<dbReference type="KEGG" id="cbe:Cbei_0013"/>
<dbReference type="eggNOG" id="COG3857">
    <property type="taxonomic scope" value="Bacteria"/>
</dbReference>
<dbReference type="HOGENOM" id="CLU_007838_0_0_9"/>
<dbReference type="Proteomes" id="UP000000565">
    <property type="component" value="Chromosome"/>
</dbReference>
<dbReference type="GO" id="GO:0051539">
    <property type="term" value="F:4 iron, 4 sulfur cluster binding"/>
    <property type="evidence" value="ECO:0007669"/>
    <property type="project" value="UniProtKB-KW"/>
</dbReference>
<dbReference type="GO" id="GO:0008409">
    <property type="term" value="F:5'-3' exonuclease activity"/>
    <property type="evidence" value="ECO:0007669"/>
    <property type="project" value="UniProtKB-UniRule"/>
</dbReference>
<dbReference type="GO" id="GO:0005524">
    <property type="term" value="F:ATP binding"/>
    <property type="evidence" value="ECO:0007669"/>
    <property type="project" value="UniProtKB-UniRule"/>
</dbReference>
<dbReference type="GO" id="GO:0003690">
    <property type="term" value="F:double-stranded DNA binding"/>
    <property type="evidence" value="ECO:0007669"/>
    <property type="project" value="UniProtKB-UniRule"/>
</dbReference>
<dbReference type="GO" id="GO:0004386">
    <property type="term" value="F:helicase activity"/>
    <property type="evidence" value="ECO:0007669"/>
    <property type="project" value="UniProtKB-KW"/>
</dbReference>
<dbReference type="GO" id="GO:0046872">
    <property type="term" value="F:metal ion binding"/>
    <property type="evidence" value="ECO:0007669"/>
    <property type="project" value="UniProtKB-KW"/>
</dbReference>
<dbReference type="GO" id="GO:0000724">
    <property type="term" value="P:double-strand break repair via homologous recombination"/>
    <property type="evidence" value="ECO:0007669"/>
    <property type="project" value="UniProtKB-UniRule"/>
</dbReference>
<dbReference type="Gene3D" id="3.90.320.10">
    <property type="match status" value="1"/>
</dbReference>
<dbReference type="Gene3D" id="6.10.140.1030">
    <property type="match status" value="1"/>
</dbReference>
<dbReference type="Gene3D" id="3.40.50.300">
    <property type="entry name" value="P-loop containing nucleotide triphosphate hydrolases"/>
    <property type="match status" value="3"/>
</dbReference>
<dbReference type="HAMAP" id="MF_01452">
    <property type="entry name" value="AddB_type1"/>
    <property type="match status" value="1"/>
</dbReference>
<dbReference type="InterPro" id="IPR049035">
    <property type="entry name" value="ADDB_N"/>
</dbReference>
<dbReference type="InterPro" id="IPR014140">
    <property type="entry name" value="DNA_helicase_suAddB"/>
</dbReference>
<dbReference type="InterPro" id="IPR014017">
    <property type="entry name" value="DNA_helicase_UvrD-like_C"/>
</dbReference>
<dbReference type="InterPro" id="IPR027417">
    <property type="entry name" value="P-loop_NTPase"/>
</dbReference>
<dbReference type="InterPro" id="IPR011604">
    <property type="entry name" value="PDDEXK-like_dom_sf"/>
</dbReference>
<dbReference type="InterPro" id="IPR038726">
    <property type="entry name" value="PDDEXK_AddAB-type"/>
</dbReference>
<dbReference type="InterPro" id="IPR011335">
    <property type="entry name" value="Restrct_endonuc-II-like"/>
</dbReference>
<dbReference type="NCBIfam" id="TIGR02773">
    <property type="entry name" value="addB_Gpos"/>
    <property type="match status" value="1"/>
</dbReference>
<dbReference type="PANTHER" id="PTHR30591">
    <property type="entry name" value="RECBCD ENZYME SUBUNIT RECC"/>
    <property type="match status" value="1"/>
</dbReference>
<dbReference type="PANTHER" id="PTHR30591:SF1">
    <property type="entry name" value="RECBCD ENZYME SUBUNIT RECC"/>
    <property type="match status" value="1"/>
</dbReference>
<dbReference type="Pfam" id="PF21445">
    <property type="entry name" value="ADDB_N"/>
    <property type="match status" value="1"/>
</dbReference>
<dbReference type="Pfam" id="PF12705">
    <property type="entry name" value="PDDEXK_1"/>
    <property type="match status" value="1"/>
</dbReference>
<dbReference type="SUPFAM" id="SSF52540">
    <property type="entry name" value="P-loop containing nucleoside triphosphate hydrolases"/>
    <property type="match status" value="2"/>
</dbReference>
<dbReference type="SUPFAM" id="SSF52980">
    <property type="entry name" value="Restriction endonuclease-like"/>
    <property type="match status" value="1"/>
</dbReference>
<dbReference type="PROSITE" id="PS51198">
    <property type="entry name" value="UVRD_HELICASE_ATP_BIND"/>
    <property type="match status" value="1"/>
</dbReference>
<dbReference type="PROSITE" id="PS51217">
    <property type="entry name" value="UVRD_HELICASE_CTER"/>
    <property type="match status" value="1"/>
</dbReference>
<gene>
    <name evidence="1" type="primary">addB</name>
    <name type="ordered locus">Cbei_0013</name>
</gene>
<feature type="chain" id="PRO_0000379168" description="ATP-dependent helicase/deoxyribonuclease subunit B">
    <location>
        <begin position="1"/>
        <end position="1159"/>
    </location>
</feature>
<feature type="domain" description="UvrD-like helicase ATP-binding" evidence="1">
    <location>
        <begin position="1"/>
        <end position="401"/>
    </location>
</feature>
<feature type="domain" description="UvrD-like helicase C-terminal" evidence="1">
    <location>
        <begin position="279"/>
        <end position="582"/>
    </location>
</feature>
<feature type="binding site" evidence="1">
    <location>
        <begin position="8"/>
        <end position="15"/>
    </location>
    <ligand>
        <name>ATP</name>
        <dbReference type="ChEBI" id="CHEBI:30616"/>
    </ligand>
</feature>
<feature type="binding site" evidence="1">
    <location>
        <position position="787"/>
    </location>
    <ligand>
        <name>[4Fe-4S] cluster</name>
        <dbReference type="ChEBI" id="CHEBI:49883"/>
    </ligand>
</feature>
<feature type="binding site" evidence="1">
    <location>
        <position position="1106"/>
    </location>
    <ligand>
        <name>[4Fe-4S] cluster</name>
        <dbReference type="ChEBI" id="CHEBI:49883"/>
    </ligand>
</feature>
<feature type="binding site" evidence="1">
    <location>
        <position position="1109"/>
    </location>
    <ligand>
        <name>[4Fe-4S] cluster</name>
        <dbReference type="ChEBI" id="CHEBI:49883"/>
    </ligand>
</feature>
<feature type="binding site" evidence="1">
    <location>
        <position position="1115"/>
    </location>
    <ligand>
        <name>[4Fe-4S] cluster</name>
        <dbReference type="ChEBI" id="CHEBI:49883"/>
    </ligand>
</feature>
<organism>
    <name type="scientific">Clostridium beijerinckii (strain ATCC 51743 / NCIMB 8052)</name>
    <name type="common">Clostridium acetobutylicum</name>
    <dbReference type="NCBI Taxonomy" id="290402"/>
    <lineage>
        <taxon>Bacteria</taxon>
        <taxon>Bacillati</taxon>
        <taxon>Bacillota</taxon>
        <taxon>Clostridia</taxon>
        <taxon>Eubacteriales</taxon>
        <taxon>Clostridiaceae</taxon>
        <taxon>Clostridium</taxon>
    </lineage>
</organism>
<comment type="function">
    <text evidence="1">The heterodimer acts as both an ATP-dependent DNA helicase and an ATP-dependent, dual-direction single-stranded exonuclease. Recognizes the chi site generating a DNA molecule suitable for the initiation of homologous recombination. The AddB subunit has 5' -&gt; 3' nuclease activity but not helicase activity.</text>
</comment>
<comment type="cofactor">
    <cofactor evidence="1">
        <name>Mg(2+)</name>
        <dbReference type="ChEBI" id="CHEBI:18420"/>
    </cofactor>
</comment>
<comment type="cofactor">
    <cofactor evidence="1">
        <name>[4Fe-4S] cluster</name>
        <dbReference type="ChEBI" id="CHEBI:49883"/>
    </cofactor>
    <text evidence="1">Binds 1 [4Fe-4S] cluster.</text>
</comment>
<comment type="subunit">
    <text evidence="1">Heterodimer of AddA and AddB.</text>
</comment>
<comment type="miscellaneous">
    <text evidence="1">Despite having conserved helicase domains, this subunit does not have helicase activity.</text>
</comment>
<comment type="similarity">
    <text evidence="1">Belongs to the helicase family. AddB/RexB type 1 subfamily.</text>
</comment>
<accession>A6LPC3</accession>
<proteinExistence type="inferred from homology"/>
<keyword id="KW-0004">4Fe-4S</keyword>
<keyword id="KW-0067">ATP-binding</keyword>
<keyword id="KW-0227">DNA damage</keyword>
<keyword id="KW-0234">DNA repair</keyword>
<keyword id="KW-0238">DNA-binding</keyword>
<keyword id="KW-0269">Exonuclease</keyword>
<keyword id="KW-0347">Helicase</keyword>
<keyword id="KW-0378">Hydrolase</keyword>
<keyword id="KW-0408">Iron</keyword>
<keyword id="KW-0411">Iron-sulfur</keyword>
<keyword id="KW-0479">Metal-binding</keyword>
<keyword id="KW-0540">Nuclease</keyword>
<keyword id="KW-0547">Nucleotide-binding</keyword>
<sequence length="1159" mass="135060">MSIRFVYGRSGTGKSKFCIDEIKNNIDKKLDFNKLILLVPEQYTFMTENKILHEIGENAFFRTEVLSFKKMAHNIFEEYGGRVKEIIKESGRNMLIHRVINENIEFLDYFNRMSREQGFNEIISEVISEFKKYNISIDSIRAIDEKINDAELYQKVKELMIIYEAFNLKMHENYIDGDDELTLLDKKLLESSAYVDSEVWIDEFTSFTPQQLDIIKVLAKRCRRVNITFCIDNKSLNNNSEDITDVFNIIKSTENKILKIMKENNIAYDKPVNLNNAIPYRFKGNLELDHIEKYFFSYPFNEYDKNPESITLYKASNIYDEIERVSKSITSLVRENGYRYRDISVVCRNIDDYEKIISVIFKDYNIPYFLDKKIQLLSNPLIVLISSAFEILLKNWSYESVFKYLKSGLTGIDNSYIDRLENFILEYGVKGYKWTSKEIVNEKWFRGNGELTDDKVLIAEIMEEIRYPLMTFHNKVNGKHKVKDICSAIYEFLVDVKVFDRINEWIKNFEELGLEDKVKEYSQVESIVIDIIDQAVDVIGEERLEYSEFFRILSSGFANEEIGIIPVALDQVNIGDIARIKGRDVKVLYIVGINDGVLPASKKEEGLLSDRDRTTLGEVGINLSSTTRNKVFEEQYLLYMALTISSEYLMLSYPMADFEGKSLRPSIVISRIKKIFPNLIEESAIYDLKILENKFGKIIAPIPTFNELIISMRKDFDKEYIEPYWSEVYEWFKNNDEFRDKVKNIFKGLSYSNIGDKVSKNKLRKLYQNDLEKLVFSVSKLEKYAECPFSYFVQYGLKAKNRKVYEFTPPDLGSFVHEMLDSFTNKVREDGVLWSDLSNEKCKEIISNLIDKKLMDESNSILNSTKKFKYLAQRFKRVISKSVSVIASQIGKGEFEVFKTEFDFGSYSSGEAITLDLNDNEKVYLQGRIDRIDKLDLDGETYIRIIDYKTGAKKFDLNEIYYGLQVQLLVYLDALIKNSKYILDKQVKPGAILYFKIDDPIIKSKKEMTDEEVEKEVLSALKMKGLVLKDARVVKAMDKDIEGYSLVIPASFKADGGFKATSDVVTEEEFRILREYVNRKMIEICEEMLSGDIKIQPTKNSNIAHCEYCDFSSICQFDTEIKDNKYKIIINKSTNDIWNNIKKEIDNSNKLIKVENEEV</sequence>
<name>ADDB_CLOB8</name>